<dbReference type="EC" id="3.1.21.2" evidence="1"/>
<dbReference type="EMBL" id="U00089">
    <property type="protein sequence ID" value="AAB96156.1"/>
    <property type="molecule type" value="Genomic_DNA"/>
</dbReference>
<dbReference type="PIR" id="S73834">
    <property type="entry name" value="S73834"/>
</dbReference>
<dbReference type="RefSeq" id="NP_110016.1">
    <property type="nucleotide sequence ID" value="NC_000912.1"/>
</dbReference>
<dbReference type="RefSeq" id="WP_010874684.1">
    <property type="nucleotide sequence ID" value="NZ_OU342337.1"/>
</dbReference>
<dbReference type="SMR" id="P75457"/>
<dbReference type="STRING" id="272634.MPN_328"/>
<dbReference type="EnsemblBacteria" id="AAB96156">
    <property type="protein sequence ID" value="AAB96156"/>
    <property type="gene ID" value="MPN_328"/>
</dbReference>
<dbReference type="KEGG" id="mpn:MPN_328"/>
<dbReference type="PATRIC" id="fig|272634.6.peg.352"/>
<dbReference type="HOGENOM" id="CLU_025885_0_4_14"/>
<dbReference type="OrthoDB" id="9805666at2"/>
<dbReference type="BioCyc" id="MPNE272634:G1GJ3-520-MONOMER"/>
<dbReference type="Proteomes" id="UP000000808">
    <property type="component" value="Chromosome"/>
</dbReference>
<dbReference type="GO" id="GO:0008833">
    <property type="term" value="F:deoxyribonuclease IV (phage-T4-induced) activity"/>
    <property type="evidence" value="ECO:0007669"/>
    <property type="project" value="UniProtKB-UniRule"/>
</dbReference>
<dbReference type="GO" id="GO:0003677">
    <property type="term" value="F:DNA binding"/>
    <property type="evidence" value="ECO:0007669"/>
    <property type="project" value="InterPro"/>
</dbReference>
<dbReference type="GO" id="GO:0003906">
    <property type="term" value="F:DNA-(apurinic or apyrimidinic site) endonuclease activity"/>
    <property type="evidence" value="ECO:0007669"/>
    <property type="project" value="TreeGrafter"/>
</dbReference>
<dbReference type="GO" id="GO:0008081">
    <property type="term" value="F:phosphoric diester hydrolase activity"/>
    <property type="evidence" value="ECO:0007669"/>
    <property type="project" value="TreeGrafter"/>
</dbReference>
<dbReference type="GO" id="GO:0008270">
    <property type="term" value="F:zinc ion binding"/>
    <property type="evidence" value="ECO:0007669"/>
    <property type="project" value="UniProtKB-UniRule"/>
</dbReference>
<dbReference type="GO" id="GO:0006284">
    <property type="term" value="P:base-excision repair"/>
    <property type="evidence" value="ECO:0007669"/>
    <property type="project" value="TreeGrafter"/>
</dbReference>
<dbReference type="CDD" id="cd00019">
    <property type="entry name" value="AP2Ec"/>
    <property type="match status" value="1"/>
</dbReference>
<dbReference type="FunFam" id="3.20.20.150:FF:000001">
    <property type="entry name" value="Probable endonuclease 4"/>
    <property type="match status" value="1"/>
</dbReference>
<dbReference type="Gene3D" id="3.20.20.150">
    <property type="entry name" value="Divalent-metal-dependent TIM barrel enzymes"/>
    <property type="match status" value="1"/>
</dbReference>
<dbReference type="HAMAP" id="MF_00152">
    <property type="entry name" value="Nfo"/>
    <property type="match status" value="1"/>
</dbReference>
<dbReference type="InterPro" id="IPR001719">
    <property type="entry name" value="AP_endonuc_2"/>
</dbReference>
<dbReference type="InterPro" id="IPR018246">
    <property type="entry name" value="AP_endonuc_F2_Zn_BS"/>
</dbReference>
<dbReference type="InterPro" id="IPR036237">
    <property type="entry name" value="Xyl_isomerase-like_sf"/>
</dbReference>
<dbReference type="InterPro" id="IPR013022">
    <property type="entry name" value="Xyl_isomerase-like_TIM-brl"/>
</dbReference>
<dbReference type="NCBIfam" id="TIGR00587">
    <property type="entry name" value="nfo"/>
    <property type="match status" value="1"/>
</dbReference>
<dbReference type="PANTHER" id="PTHR21445:SF0">
    <property type="entry name" value="APURINIC-APYRIMIDINIC ENDONUCLEASE"/>
    <property type="match status" value="1"/>
</dbReference>
<dbReference type="PANTHER" id="PTHR21445">
    <property type="entry name" value="ENDONUCLEASE IV ENDODEOXYRIBONUCLEASE IV"/>
    <property type="match status" value="1"/>
</dbReference>
<dbReference type="Pfam" id="PF01261">
    <property type="entry name" value="AP_endonuc_2"/>
    <property type="match status" value="1"/>
</dbReference>
<dbReference type="SMART" id="SM00518">
    <property type="entry name" value="AP2Ec"/>
    <property type="match status" value="1"/>
</dbReference>
<dbReference type="SUPFAM" id="SSF51658">
    <property type="entry name" value="Xylose isomerase-like"/>
    <property type="match status" value="1"/>
</dbReference>
<dbReference type="PROSITE" id="PS00729">
    <property type="entry name" value="AP_NUCLEASE_F2_1"/>
    <property type="match status" value="1"/>
</dbReference>
<dbReference type="PROSITE" id="PS00730">
    <property type="entry name" value="AP_NUCLEASE_F2_2"/>
    <property type="match status" value="1"/>
</dbReference>
<dbReference type="PROSITE" id="PS00731">
    <property type="entry name" value="AP_NUCLEASE_F2_3"/>
    <property type="match status" value="1"/>
</dbReference>
<dbReference type="PROSITE" id="PS51432">
    <property type="entry name" value="AP_NUCLEASE_F2_4"/>
    <property type="match status" value="1"/>
</dbReference>
<name>END4_MYCPN</name>
<reference key="1">
    <citation type="journal article" date="1996" name="Nucleic Acids Res.">
        <title>Complete sequence analysis of the genome of the bacterium Mycoplasma pneumoniae.</title>
        <authorList>
            <person name="Himmelreich R."/>
            <person name="Hilbert H."/>
            <person name="Plagens H."/>
            <person name="Pirkl E."/>
            <person name="Li B.-C."/>
            <person name="Herrmann R."/>
        </authorList>
    </citation>
    <scope>NUCLEOTIDE SEQUENCE [LARGE SCALE GENOMIC DNA]</scope>
    <source>
        <strain>ATCC 29342 / M129 / Subtype 1</strain>
    </source>
</reference>
<accession>P75457</accession>
<proteinExistence type="inferred from homology"/>
<protein>
    <recommendedName>
        <fullName evidence="1">Probable endonuclease 4</fullName>
        <ecNumber evidence="1">3.1.21.2</ecNumber>
    </recommendedName>
    <alternativeName>
        <fullName evidence="1">Endodeoxyribonuclease IV</fullName>
    </alternativeName>
    <alternativeName>
        <fullName evidence="1">Endonuclease IV</fullName>
    </alternativeName>
</protein>
<gene>
    <name evidence="1" type="primary">nfo</name>
    <name type="ordered locus">MPN_328</name>
    <name type="ORF">MP508</name>
</gene>
<comment type="function">
    <text evidence="1">Endonuclease IV plays a role in DNA repair. It cleaves phosphodiester bonds at apurinic or apyrimidinic (AP) sites, generating a 3'-hydroxyl group and a 5'-terminal sugar phosphate.</text>
</comment>
<comment type="catalytic activity">
    <reaction evidence="1">
        <text>Endonucleolytic cleavage to 5'-phosphooligonucleotide end-products.</text>
        <dbReference type="EC" id="3.1.21.2"/>
    </reaction>
</comment>
<comment type="cofactor">
    <cofactor evidence="1">
        <name>Zn(2+)</name>
        <dbReference type="ChEBI" id="CHEBI:29105"/>
    </cofactor>
    <text evidence="1">Binds 3 Zn(2+) ions.</text>
</comment>
<comment type="similarity">
    <text evidence="1">Belongs to the AP endonuclease 2 family.</text>
</comment>
<keyword id="KW-0227">DNA damage</keyword>
<keyword id="KW-0234">DNA repair</keyword>
<keyword id="KW-0255">Endonuclease</keyword>
<keyword id="KW-0378">Hydrolase</keyword>
<keyword id="KW-0479">Metal-binding</keyword>
<keyword id="KW-0540">Nuclease</keyword>
<keyword id="KW-1185">Reference proteome</keyword>
<keyword id="KW-0862">Zinc</keyword>
<organism>
    <name type="scientific">Mycoplasma pneumoniae (strain ATCC 29342 / M129 / Subtype 1)</name>
    <name type="common">Mycoplasmoides pneumoniae</name>
    <dbReference type="NCBI Taxonomy" id="272634"/>
    <lineage>
        <taxon>Bacteria</taxon>
        <taxon>Bacillati</taxon>
        <taxon>Mycoplasmatota</taxon>
        <taxon>Mycoplasmoidales</taxon>
        <taxon>Mycoplasmoidaceae</taxon>
        <taxon>Mycoplasmoides</taxon>
    </lineage>
</organism>
<sequence>MPKLLGSFISFKSPHYLVGSVRDAVSIKAQAFMIFLGAPHTALRVDPNRMQIDEGHTLMEQHNLSKSGMVVHAPYIINCASKDPVKQTFAIDVLTREVKLCHAVGAKLIVLHPGSAVEQTQTQALDHLIKVLNTVIANTKEVIICLETMAGKGNEIGRDLDQLKYVINHIEQQERIGVCLDTCHFHDSGNDFNNTAEIMETIDTKLGFEFLKVIHLNESKNVCGSKKDRHANLGEGMIGFDNLMRFIAQPQIKQIPIVLETPSDKHNYPAVYGAEIERIRAWFGAR</sequence>
<evidence type="ECO:0000255" key="1">
    <source>
        <dbReference type="HAMAP-Rule" id="MF_00152"/>
    </source>
</evidence>
<feature type="chain" id="PRO_0000190858" description="Probable endonuclease 4">
    <location>
        <begin position="1"/>
        <end position="286"/>
    </location>
</feature>
<feature type="binding site" evidence="1">
    <location>
        <position position="72"/>
    </location>
    <ligand>
        <name>Zn(2+)</name>
        <dbReference type="ChEBI" id="CHEBI:29105"/>
        <label>1</label>
    </ligand>
</feature>
<feature type="binding site" evidence="1">
    <location>
        <position position="112"/>
    </location>
    <ligand>
        <name>Zn(2+)</name>
        <dbReference type="ChEBI" id="CHEBI:29105"/>
        <label>1</label>
    </ligand>
</feature>
<feature type="binding site" evidence="1">
    <location>
        <position position="147"/>
    </location>
    <ligand>
        <name>Zn(2+)</name>
        <dbReference type="ChEBI" id="CHEBI:29105"/>
        <label>1</label>
    </ligand>
</feature>
<feature type="binding site" evidence="1">
    <location>
        <position position="147"/>
    </location>
    <ligand>
        <name>Zn(2+)</name>
        <dbReference type="ChEBI" id="CHEBI:29105"/>
        <label>2</label>
    </ligand>
</feature>
<feature type="binding site" evidence="1">
    <location>
        <position position="181"/>
    </location>
    <ligand>
        <name>Zn(2+)</name>
        <dbReference type="ChEBI" id="CHEBI:29105"/>
        <label>2</label>
    </ligand>
</feature>
<feature type="binding site" evidence="1">
    <location>
        <position position="184"/>
    </location>
    <ligand>
        <name>Zn(2+)</name>
        <dbReference type="ChEBI" id="CHEBI:29105"/>
        <label>3</label>
    </ligand>
</feature>
<feature type="binding site" evidence="1">
    <location>
        <position position="215"/>
    </location>
    <ligand>
        <name>Zn(2+)</name>
        <dbReference type="ChEBI" id="CHEBI:29105"/>
        <label>2</label>
    </ligand>
</feature>
<feature type="binding site" evidence="1">
    <location>
        <position position="228"/>
    </location>
    <ligand>
        <name>Zn(2+)</name>
        <dbReference type="ChEBI" id="CHEBI:29105"/>
        <label>3</label>
    </ligand>
</feature>
<feature type="binding site" evidence="1">
    <location>
        <position position="230"/>
    </location>
    <ligand>
        <name>Zn(2+)</name>
        <dbReference type="ChEBI" id="CHEBI:29105"/>
        <label>3</label>
    </ligand>
</feature>
<feature type="binding site" evidence="1">
    <location>
        <position position="260"/>
    </location>
    <ligand>
        <name>Zn(2+)</name>
        <dbReference type="ChEBI" id="CHEBI:29105"/>
        <label>2</label>
    </ligand>
</feature>